<evidence type="ECO:0000269" key="1">
    <source>
    </source>
</evidence>
<evidence type="ECO:0000269" key="2">
    <source>
    </source>
</evidence>
<evidence type="ECO:0000303" key="3">
    <source>
    </source>
</evidence>
<evidence type="ECO:0000305" key="4"/>
<evidence type="ECO:0000312" key="5">
    <source>
        <dbReference type="EMBL" id="AAK41537.1"/>
    </source>
</evidence>
<evidence type="ECO:0007744" key="6">
    <source>
        <dbReference type="PDB" id="2H6E"/>
    </source>
</evidence>
<evidence type="ECO:0007829" key="7">
    <source>
        <dbReference type="PDB" id="2H6E"/>
    </source>
</evidence>
<comment type="function">
    <text evidence="1 2">Participates in a pentose oxidation pathway that converts D-arabinose to 2-oxoglutarate (PubMed:16849334). Catalyzes the NADP-dependent conversion of D-arabinose to D-arabinono-1,4-lactone (PubMed:16849334, PubMed:17610898). In vitro, can also use L-fucose, L-galactose and D-ribose (PubMed:16849334, PubMed:17610898). Shows highest activity with L-fucose, in combinaison with NAD, and lower activity toward L-galactose and D-ribose (PubMed:16849334, PubMed:17610898). When acting on its physiological substrate, D-arabinose, shows a clear preference for NADP over NAD (PubMed:16849334).</text>
</comment>
<comment type="catalytic activity">
    <reaction evidence="1 2">
        <text>D-arabinose + NADP(+) = D-arabinono-1,4-lactone + NADPH + H(+)</text>
        <dbReference type="Rhea" id="RHEA:21892"/>
        <dbReference type="ChEBI" id="CHEBI:15378"/>
        <dbReference type="ChEBI" id="CHEBI:16292"/>
        <dbReference type="ChEBI" id="CHEBI:46994"/>
        <dbReference type="ChEBI" id="CHEBI:57783"/>
        <dbReference type="ChEBI" id="CHEBI:58349"/>
        <dbReference type="EC" id="1.1.1.427"/>
    </reaction>
    <physiologicalReaction direction="left-to-right" evidence="1">
        <dbReference type="Rhea" id="RHEA:21893"/>
    </physiologicalReaction>
</comment>
<comment type="cofactor">
    <cofactor evidence="1 2">
        <name>Zn(2+)</name>
        <dbReference type="ChEBI" id="CHEBI:29105"/>
    </cofactor>
    <text evidence="1 2">Binds 2 Zn(2+) ions per subunit.</text>
</comment>
<comment type="biophysicochemical properties">
    <kinetics>
        <KM evidence="2">1.4 mM for D-arabinose</KM>
        <KM evidence="2">0.22 mM for L-fucose</KM>
        <KM evidence="1">0.04 mM for NADP(+)</KM>
        <KM evidence="2">0.038 mM for NADP(+)</KM>
        <KM evidence="1 2">1.25 mM for NAD(+)</KM>
        <Vmax evidence="2">23.8 umol/min/mg enzyme with D-arabinose as substrate</Vmax>
        <Vmax evidence="2">23.7 umol/min/mg enzyme with L-fucose as substrate</Vmax>
        <Vmax evidence="2">32.1 umol/min/mg enzyme with NADP(+) as substrate</Vmax>
        <Vmax evidence="2">29.1 umol/min/mg enzyme with NAD(+) as substrate</Vmax>
        <text evidence="1">kcat is 23.8 sec(-1) with D-arabinose as substrate. kcat is 26.8 sec(-1) with L-fucose as substrate. kcat is 17.7 sec(-1) with L-galactose or D-ribose as substrate.</text>
    </kinetics>
    <phDependence>
        <text evidence="1 2">Optimum pH is 8.2 (PubMed:16849334, PubMed:17610898). Is more than 50% active in a relatively narrow pH range from 7.3 to 9.3 (PubMed:17610898).</text>
    </phDependence>
    <temperatureDependence>
        <text evidence="1 2">Optimum temperature is 91 degrees Celsius.</text>
    </temperatureDependence>
</comment>
<comment type="subunit">
    <text evidence="1 2">Homotetramer (PubMed:16849334, PubMed:17610898). Dimer of dimers (PubMed:17610898).</text>
</comment>
<comment type="induction">
    <text evidence="1">Expression is highly induced during growth on D-arabinose. The promoter contains the conserved cis-regulatory element 5'-AACATGTT-3' ARA-box found in arabinose-induced genes.</text>
</comment>
<comment type="domain">
    <text evidence="2">Contains two domains: a catalytic domain (residues 1-154 and 292-344) and a nucleotide binding domain (residues 155-291) (PubMed:17610898). The active site resides in a deep cleft between the domains (PubMed:17610898).</text>
</comment>
<comment type="similarity">
    <text evidence="4">Belongs to the zinc-containing alcohol dehydrogenase family.</text>
</comment>
<sequence>MENVNMVKSKAALLKKFSEPLSIEDVNIPEPQGEEVLIRIGGAGVCRTDLRVWKGVEAKQGFRLPIILGHENAGTIVEVGELAKVKKGDNVVVYATWGDLTCRYCREGKFNICKNQIIPGQTTNGGFSEYMLVKSSRWLVKLNSLSPVEAAPLADAGTTSMGAIRQALPFISKFAEPVVIVNGIGGLAVYTIQILKALMKNITIVGISRSKKHRDFALELGADYVSEMKDAESLINKLTDGLGASIAIDLVGTEETTYNLGKLLAQEGAIILVGMEGKRVSLEAFDTAVWNKKLLGSNYGSLNDLEDVVRLSESGKIKPYIIKVPLDDINKAFTNLDEGRVDGRQVITP</sequence>
<dbReference type="EC" id="1.1.1.427" evidence="1"/>
<dbReference type="EMBL" id="AE006641">
    <property type="protein sequence ID" value="AAK41537.1"/>
    <property type="molecule type" value="Genomic_DNA"/>
</dbReference>
<dbReference type="PIR" id="B90285">
    <property type="entry name" value="B90285"/>
</dbReference>
<dbReference type="PDB" id="2H6E">
    <property type="method" value="X-ray"/>
    <property type="resolution" value="1.80 A"/>
    <property type="chains" value="A=6-349"/>
</dbReference>
<dbReference type="PDBsum" id="2H6E"/>
<dbReference type="SMR" id="Q97YM2"/>
<dbReference type="FunCoup" id="Q97YM2">
    <property type="interactions" value="40"/>
</dbReference>
<dbReference type="STRING" id="273057.SSO1300"/>
<dbReference type="PaxDb" id="273057-SSO1300"/>
<dbReference type="EnsemblBacteria" id="AAK41537">
    <property type="protein sequence ID" value="AAK41537"/>
    <property type="gene ID" value="SSO1300"/>
</dbReference>
<dbReference type="KEGG" id="sso:SSO1300"/>
<dbReference type="PATRIC" id="fig|273057.12.peg.1301"/>
<dbReference type="eggNOG" id="arCOG01457">
    <property type="taxonomic scope" value="Archaea"/>
</dbReference>
<dbReference type="HOGENOM" id="CLU_026673_11_2_2"/>
<dbReference type="InParanoid" id="Q97YM2"/>
<dbReference type="PhylomeDB" id="Q97YM2"/>
<dbReference type="BioCyc" id="MetaCyc:MONOMER-13204"/>
<dbReference type="BRENDA" id="1.1.1.122">
    <property type="organism ID" value="6163"/>
</dbReference>
<dbReference type="BRENDA" id="1.1.1.B35">
    <property type="organism ID" value="6163"/>
</dbReference>
<dbReference type="EvolutionaryTrace" id="Q97YM2"/>
<dbReference type="Proteomes" id="UP000001974">
    <property type="component" value="Chromosome"/>
</dbReference>
<dbReference type="GO" id="GO:0030554">
    <property type="term" value="F:adenyl nucleotide binding"/>
    <property type="evidence" value="ECO:0007669"/>
    <property type="project" value="UniProtKB-ARBA"/>
</dbReference>
<dbReference type="GO" id="GO:0004022">
    <property type="term" value="F:alcohol dehydrogenase (NAD+) activity"/>
    <property type="evidence" value="ECO:0007669"/>
    <property type="project" value="UniProtKB-EC"/>
</dbReference>
<dbReference type="GO" id="GO:0043168">
    <property type="term" value="F:anion binding"/>
    <property type="evidence" value="ECO:0007669"/>
    <property type="project" value="UniProtKB-ARBA"/>
</dbReference>
<dbReference type="GO" id="GO:0106271">
    <property type="term" value="F:D-arabinose 1-dehydrogenase (NADP+) activity"/>
    <property type="evidence" value="ECO:0007669"/>
    <property type="project" value="RHEA"/>
</dbReference>
<dbReference type="GO" id="GO:0008270">
    <property type="term" value="F:zinc ion binding"/>
    <property type="evidence" value="ECO:0007669"/>
    <property type="project" value="InterPro"/>
</dbReference>
<dbReference type="GO" id="GO:0019568">
    <property type="term" value="P:arabinose catabolic process"/>
    <property type="evidence" value="ECO:0007669"/>
    <property type="project" value="UniProtKB-KW"/>
</dbReference>
<dbReference type="GO" id="GO:0051262">
    <property type="term" value="P:protein tetramerization"/>
    <property type="evidence" value="ECO:0007669"/>
    <property type="project" value="UniProtKB-ARBA"/>
</dbReference>
<dbReference type="CDD" id="cd05284">
    <property type="entry name" value="arabinose_DH_like"/>
    <property type="match status" value="1"/>
</dbReference>
<dbReference type="Gene3D" id="3.90.180.10">
    <property type="entry name" value="Medium-chain alcohol dehydrogenases, catalytic domain"/>
    <property type="match status" value="1"/>
</dbReference>
<dbReference type="Gene3D" id="3.40.50.720">
    <property type="entry name" value="NAD(P)-binding Rossmann-like Domain"/>
    <property type="match status" value="1"/>
</dbReference>
<dbReference type="InterPro" id="IPR013149">
    <property type="entry name" value="ADH-like_C"/>
</dbReference>
<dbReference type="InterPro" id="IPR013154">
    <property type="entry name" value="ADH-like_N"/>
</dbReference>
<dbReference type="InterPro" id="IPR002328">
    <property type="entry name" value="ADH_Zn_CS"/>
</dbReference>
<dbReference type="InterPro" id="IPR011032">
    <property type="entry name" value="GroES-like_sf"/>
</dbReference>
<dbReference type="InterPro" id="IPR036291">
    <property type="entry name" value="NAD(P)-bd_dom_sf"/>
</dbReference>
<dbReference type="InterPro" id="IPR050129">
    <property type="entry name" value="Zn_alcohol_dh"/>
</dbReference>
<dbReference type="PANTHER" id="PTHR43401:SF4">
    <property type="entry name" value="D-ARABINOSE 1-DEHYDROGENASE (NADP(+))"/>
    <property type="match status" value="1"/>
</dbReference>
<dbReference type="PANTHER" id="PTHR43401">
    <property type="entry name" value="L-THREONINE 3-DEHYDROGENASE"/>
    <property type="match status" value="1"/>
</dbReference>
<dbReference type="Pfam" id="PF08240">
    <property type="entry name" value="ADH_N"/>
    <property type="match status" value="1"/>
</dbReference>
<dbReference type="Pfam" id="PF00107">
    <property type="entry name" value="ADH_zinc_N"/>
    <property type="match status" value="1"/>
</dbReference>
<dbReference type="SUPFAM" id="SSF50129">
    <property type="entry name" value="GroES-like"/>
    <property type="match status" value="1"/>
</dbReference>
<dbReference type="SUPFAM" id="SSF51735">
    <property type="entry name" value="NAD(P)-binding Rossmann-fold domains"/>
    <property type="match status" value="1"/>
</dbReference>
<dbReference type="PROSITE" id="PS00059">
    <property type="entry name" value="ADH_ZINC"/>
    <property type="match status" value="1"/>
</dbReference>
<name>ARADH_SACS2</name>
<protein>
    <recommendedName>
        <fullName evidence="4">D-arabinose 1-dehydrogenase (NADP(+))</fullName>
        <shortName evidence="3">AraDH</shortName>
        <shortName evidence="3">D-Ara dehydrogenase</shortName>
        <ecNumber evidence="1">1.1.1.427</ecNumber>
    </recommendedName>
</protein>
<accession>Q97YM2</accession>
<proteinExistence type="evidence at protein level"/>
<organism>
    <name type="scientific">Saccharolobus solfataricus (strain ATCC 35092 / DSM 1617 / JCM 11322 / P2)</name>
    <name type="common">Sulfolobus solfataricus</name>
    <dbReference type="NCBI Taxonomy" id="273057"/>
    <lineage>
        <taxon>Archaea</taxon>
        <taxon>Thermoproteota</taxon>
        <taxon>Thermoprotei</taxon>
        <taxon>Sulfolobales</taxon>
        <taxon>Sulfolobaceae</taxon>
        <taxon>Saccharolobus</taxon>
    </lineage>
</organism>
<reference key="1">
    <citation type="journal article" date="2001" name="Proc. Natl. Acad. Sci. U.S.A.">
        <title>The complete genome of the crenarchaeon Sulfolobus solfataricus P2.</title>
        <authorList>
            <person name="She Q."/>
            <person name="Singh R.K."/>
            <person name="Confalonieri F."/>
            <person name="Zivanovic Y."/>
            <person name="Allard G."/>
            <person name="Awayez M.J."/>
            <person name="Chan-Weiher C.C.-Y."/>
            <person name="Clausen I.G."/>
            <person name="Curtis B.A."/>
            <person name="De Moors A."/>
            <person name="Erauso G."/>
            <person name="Fletcher C."/>
            <person name="Gordon P.M.K."/>
            <person name="Heikamp-de Jong I."/>
            <person name="Jeffries A.C."/>
            <person name="Kozera C.J."/>
            <person name="Medina N."/>
            <person name="Peng X."/>
            <person name="Thi-Ngoc H.P."/>
            <person name="Redder P."/>
            <person name="Schenk M.E."/>
            <person name="Theriault C."/>
            <person name="Tolstrup N."/>
            <person name="Charlebois R.L."/>
            <person name="Doolittle W.F."/>
            <person name="Duguet M."/>
            <person name="Gaasterland T."/>
            <person name="Garrett R.A."/>
            <person name="Ragan M.A."/>
            <person name="Sensen C.W."/>
            <person name="Van der Oost J."/>
        </authorList>
    </citation>
    <scope>NUCLEOTIDE SEQUENCE [LARGE SCALE GENOMIC DNA]</scope>
    <source>
        <strain>ATCC 35092 / DSM 1617 / JCM 11322 / P2</strain>
    </source>
</reference>
<reference key="2">
    <citation type="journal article" date="2006" name="J. Biol. Chem.">
        <title>Identification of the missing links in prokaryotic pentose oxidation pathways: evidence for enzyme recruitment.</title>
        <authorList>
            <person name="Brouns S.J."/>
            <person name="Walther J."/>
            <person name="Snijders A.P."/>
            <person name="van de Werken H.J."/>
            <person name="Willemen H.L."/>
            <person name="Worm P."/>
            <person name="de Vos M.G."/>
            <person name="Andersson A."/>
            <person name="Lundgren M."/>
            <person name="Mazon H.F."/>
            <person name="van den Heuvel R.H."/>
            <person name="Nilsson P."/>
            <person name="Salmon L."/>
            <person name="de Vos W.M."/>
            <person name="Wright P.C."/>
            <person name="Bernander R."/>
            <person name="van der Oost J."/>
        </authorList>
    </citation>
    <scope>FUNCTION</scope>
    <scope>CATALYTIC ACTIVITY</scope>
    <scope>COFACTOR</scope>
    <scope>BIOPHYSICOCHEMICAL PROPERTIES</scope>
    <scope>SUBUNIT</scope>
    <scope>INDUCTION</scope>
    <source>
        <strain>ATCC 35092 / DSM 1617 / JCM 11322 / P2</strain>
    </source>
</reference>
<reference evidence="6" key="3">
    <citation type="journal article" date="2007" name="J. Mol. Biol.">
        <title>Crystal structure and biochemical properties of the D-arabinose dehydrogenase from Sulfolobus solfataricus.</title>
        <authorList>
            <person name="Brouns S.J."/>
            <person name="Turnbull A.P."/>
            <person name="Willemen H.L."/>
            <person name="Akerboom J."/>
            <person name="van der Oost J."/>
        </authorList>
    </citation>
    <scope>X-RAY CRYSTALLOGRAPHY (1.80 ANGSTROMS) OF 6-349 IN COMPLEX WITH ZINC</scope>
    <scope>FUNCTION</scope>
    <scope>CATALYTIC ACTIVITY</scope>
    <scope>COFACTOR</scope>
    <scope>BIOPHYSICOCHEMICAL PROPERTIES</scope>
    <scope>SUBUNIT</scope>
    <scope>DOMAIN</scope>
    <source>
        <strain>ATCC 35092 / DSM 1617 / JCM 11322 / P2</strain>
    </source>
</reference>
<keyword id="KW-0002">3D-structure</keyword>
<keyword id="KW-0054">Arabinose catabolism</keyword>
<keyword id="KW-0119">Carbohydrate metabolism</keyword>
<keyword id="KW-0479">Metal-binding</keyword>
<keyword id="KW-0521">NADP</keyword>
<keyword id="KW-0560">Oxidoreductase</keyword>
<keyword id="KW-1185">Reference proteome</keyword>
<keyword id="KW-0862">Zinc</keyword>
<gene>
    <name evidence="3" type="primary">araDH</name>
    <name evidence="5" type="synonym">adh-4</name>
    <name evidence="5" type="ordered locus">SSO1300</name>
</gene>
<feature type="chain" id="PRO_0000457928" description="D-arabinose 1-dehydrogenase (NADP(+))">
    <location>
        <begin position="1"/>
        <end position="349"/>
    </location>
</feature>
<feature type="binding site" evidence="2 6">
    <location>
        <position position="46"/>
    </location>
    <ligand>
        <name>Zn(2+)</name>
        <dbReference type="ChEBI" id="CHEBI:29105"/>
        <label>1</label>
        <note>catalytic</note>
    </ligand>
</feature>
<feature type="binding site" evidence="2 6">
    <location>
        <position position="70"/>
    </location>
    <ligand>
        <name>Zn(2+)</name>
        <dbReference type="ChEBI" id="CHEBI:29105"/>
        <label>1</label>
        <note>catalytic</note>
    </ligand>
</feature>
<feature type="binding site" evidence="2 6">
    <location>
        <position position="99"/>
    </location>
    <ligand>
        <name>Zn(2+)</name>
        <dbReference type="ChEBI" id="CHEBI:29105"/>
        <label>2</label>
        <note>structural</note>
    </ligand>
</feature>
<feature type="binding site" evidence="2 6">
    <location>
        <position position="102"/>
    </location>
    <ligand>
        <name>Zn(2+)</name>
        <dbReference type="ChEBI" id="CHEBI:29105"/>
        <label>2</label>
        <note>structural</note>
    </ligand>
</feature>
<feature type="binding site" evidence="2 6">
    <location>
        <position position="105"/>
    </location>
    <ligand>
        <name>Zn(2+)</name>
        <dbReference type="ChEBI" id="CHEBI:29105"/>
        <label>2</label>
        <note>structural</note>
    </ligand>
</feature>
<feature type="binding site" evidence="2 6">
    <location>
        <position position="113"/>
    </location>
    <ligand>
        <name>Zn(2+)</name>
        <dbReference type="ChEBI" id="CHEBI:29105"/>
        <label>2</label>
        <note>structural</note>
    </ligand>
</feature>
<feature type="binding site" evidence="2 6">
    <location>
        <position position="155"/>
    </location>
    <ligand>
        <name>Zn(2+)</name>
        <dbReference type="ChEBI" id="CHEBI:29105"/>
        <label>1</label>
        <note>catalytic</note>
    </ligand>
</feature>
<feature type="strand" evidence="7">
    <location>
        <begin position="7"/>
        <end position="11"/>
    </location>
</feature>
<feature type="strand" evidence="7">
    <location>
        <begin position="25"/>
        <end position="28"/>
    </location>
</feature>
<feature type="strand" evidence="7">
    <location>
        <begin position="36"/>
        <end position="44"/>
    </location>
</feature>
<feature type="helix" evidence="7">
    <location>
        <begin position="47"/>
        <end position="53"/>
    </location>
</feature>
<feature type="strand" evidence="7">
    <location>
        <begin position="64"/>
        <end position="67"/>
    </location>
</feature>
<feature type="strand" evidence="7">
    <location>
        <begin position="72"/>
        <end position="79"/>
    </location>
</feature>
<feature type="strand" evidence="7">
    <location>
        <begin position="90"/>
        <end position="93"/>
    </location>
</feature>
<feature type="helix" evidence="7">
    <location>
        <begin position="105"/>
        <end position="107"/>
    </location>
</feature>
<feature type="helix" evidence="7">
    <location>
        <begin position="110"/>
        <end position="112"/>
    </location>
</feature>
<feature type="turn" evidence="7">
    <location>
        <begin position="119"/>
        <end position="121"/>
    </location>
</feature>
<feature type="strand" evidence="7">
    <location>
        <begin position="126"/>
        <end position="134"/>
    </location>
</feature>
<feature type="helix" evidence="7">
    <location>
        <begin position="136"/>
        <end position="138"/>
    </location>
</feature>
<feature type="strand" evidence="7">
    <location>
        <begin position="139"/>
        <end position="145"/>
    </location>
</feature>
<feature type="helix" evidence="7">
    <location>
        <begin position="147"/>
        <end position="150"/>
    </location>
</feature>
<feature type="helix" evidence="7">
    <location>
        <begin position="151"/>
        <end position="154"/>
    </location>
</feature>
<feature type="helix" evidence="7">
    <location>
        <begin position="156"/>
        <end position="171"/>
    </location>
</feature>
<feature type="strand" evidence="7">
    <location>
        <begin position="178"/>
        <end position="182"/>
    </location>
</feature>
<feature type="helix" evidence="7">
    <location>
        <begin position="186"/>
        <end position="198"/>
    </location>
</feature>
<feature type="strand" evidence="7">
    <location>
        <begin position="203"/>
        <end position="207"/>
    </location>
</feature>
<feature type="helix" evidence="7">
    <location>
        <begin position="211"/>
        <end position="220"/>
    </location>
</feature>
<feature type="strand" evidence="7">
    <location>
        <begin position="223"/>
        <end position="226"/>
    </location>
</feature>
<feature type="helix" evidence="7">
    <location>
        <begin position="228"/>
        <end position="239"/>
    </location>
</feature>
<feature type="strand" evidence="7">
    <location>
        <begin position="244"/>
        <end position="251"/>
    </location>
</feature>
<feature type="helix" evidence="7">
    <location>
        <begin position="254"/>
        <end position="263"/>
    </location>
</feature>
<feature type="strand" evidence="7">
    <location>
        <begin position="264"/>
        <end position="272"/>
    </location>
</feature>
<feature type="helix" evidence="7">
    <location>
        <begin position="284"/>
        <end position="289"/>
    </location>
</feature>
<feature type="strand" evidence="7">
    <location>
        <begin position="293"/>
        <end position="296"/>
    </location>
</feature>
<feature type="helix" evidence="7">
    <location>
        <begin position="302"/>
        <end position="313"/>
    </location>
</feature>
<feature type="strand" evidence="7">
    <location>
        <begin position="321"/>
        <end position="324"/>
    </location>
</feature>
<feature type="strand" evidence="7">
    <location>
        <begin position="344"/>
        <end position="347"/>
    </location>
</feature>